<dbReference type="EMBL" id="CP000580">
    <property type="protein sequence ID" value="ABN99239.1"/>
    <property type="molecule type" value="Genomic_DNA"/>
</dbReference>
<dbReference type="SMR" id="A3Q262"/>
<dbReference type="KEGG" id="mjl:Mjls_3461"/>
<dbReference type="HOGENOM" id="CLU_066632_1_1_11"/>
<dbReference type="BioCyc" id="MSP164757:G1G8C-3491-MONOMER"/>
<dbReference type="GO" id="GO:0043590">
    <property type="term" value="C:bacterial nucleoid"/>
    <property type="evidence" value="ECO:0007669"/>
    <property type="project" value="TreeGrafter"/>
</dbReference>
<dbReference type="GO" id="GO:0006310">
    <property type="term" value="P:DNA recombination"/>
    <property type="evidence" value="ECO:0007669"/>
    <property type="project" value="UniProtKB-UniRule"/>
</dbReference>
<dbReference type="GO" id="GO:0006302">
    <property type="term" value="P:double-strand break repair"/>
    <property type="evidence" value="ECO:0007669"/>
    <property type="project" value="TreeGrafter"/>
</dbReference>
<dbReference type="FunFam" id="2.40.50.140:FF:000176">
    <property type="entry name" value="DNA repair protein RecO"/>
    <property type="match status" value="1"/>
</dbReference>
<dbReference type="Gene3D" id="2.40.50.140">
    <property type="entry name" value="Nucleic acid-binding proteins"/>
    <property type="match status" value="1"/>
</dbReference>
<dbReference type="Gene3D" id="1.20.1440.120">
    <property type="entry name" value="Recombination protein O, C-terminal domain"/>
    <property type="match status" value="1"/>
</dbReference>
<dbReference type="HAMAP" id="MF_00201">
    <property type="entry name" value="RecO"/>
    <property type="match status" value="1"/>
</dbReference>
<dbReference type="InterPro" id="IPR037278">
    <property type="entry name" value="ARFGAP/RecO"/>
</dbReference>
<dbReference type="InterPro" id="IPR022572">
    <property type="entry name" value="DNA_rep/recomb_RecO_N"/>
</dbReference>
<dbReference type="InterPro" id="IPR012340">
    <property type="entry name" value="NA-bd_OB-fold"/>
</dbReference>
<dbReference type="InterPro" id="IPR003717">
    <property type="entry name" value="RecO"/>
</dbReference>
<dbReference type="InterPro" id="IPR042242">
    <property type="entry name" value="RecO_C"/>
</dbReference>
<dbReference type="NCBIfam" id="TIGR00613">
    <property type="entry name" value="reco"/>
    <property type="match status" value="1"/>
</dbReference>
<dbReference type="PANTHER" id="PTHR33991">
    <property type="entry name" value="DNA REPAIR PROTEIN RECO"/>
    <property type="match status" value="1"/>
</dbReference>
<dbReference type="PANTHER" id="PTHR33991:SF1">
    <property type="entry name" value="DNA REPAIR PROTEIN RECO"/>
    <property type="match status" value="1"/>
</dbReference>
<dbReference type="Pfam" id="PF02565">
    <property type="entry name" value="RecO_C"/>
    <property type="match status" value="1"/>
</dbReference>
<dbReference type="Pfam" id="PF11967">
    <property type="entry name" value="RecO_N"/>
    <property type="match status" value="1"/>
</dbReference>
<dbReference type="SUPFAM" id="SSF57863">
    <property type="entry name" value="ArfGap/RecO-like zinc finger"/>
    <property type="match status" value="1"/>
</dbReference>
<dbReference type="SUPFAM" id="SSF50249">
    <property type="entry name" value="Nucleic acid-binding proteins"/>
    <property type="match status" value="1"/>
</dbReference>
<reference key="1">
    <citation type="submission" date="2007-02" db="EMBL/GenBank/DDBJ databases">
        <title>Complete sequence of Mycobacterium sp. JLS.</title>
        <authorList>
            <consortium name="US DOE Joint Genome Institute"/>
            <person name="Copeland A."/>
            <person name="Lucas S."/>
            <person name="Lapidus A."/>
            <person name="Barry K."/>
            <person name="Detter J.C."/>
            <person name="Glavina del Rio T."/>
            <person name="Hammon N."/>
            <person name="Israni S."/>
            <person name="Dalin E."/>
            <person name="Tice H."/>
            <person name="Pitluck S."/>
            <person name="Chain P."/>
            <person name="Malfatti S."/>
            <person name="Shin M."/>
            <person name="Vergez L."/>
            <person name="Schmutz J."/>
            <person name="Larimer F."/>
            <person name="Land M."/>
            <person name="Hauser L."/>
            <person name="Kyrpides N."/>
            <person name="Mikhailova N."/>
            <person name="Miller C.D."/>
            <person name="Anderson A.J."/>
            <person name="Sims R.C."/>
            <person name="Richardson P."/>
        </authorList>
    </citation>
    <scope>NUCLEOTIDE SEQUENCE [LARGE SCALE GENOMIC DNA]</scope>
    <source>
        <strain>JLS</strain>
    </source>
</reference>
<gene>
    <name evidence="1" type="primary">recO</name>
    <name type="ordered locus">Mjls_3461</name>
</gene>
<protein>
    <recommendedName>
        <fullName evidence="1">DNA repair protein RecO</fullName>
    </recommendedName>
    <alternativeName>
        <fullName evidence="1">Recombination protein O</fullName>
    </alternativeName>
</protein>
<feature type="chain" id="PRO_1000012141" description="DNA repair protein RecO">
    <location>
        <begin position="1"/>
        <end position="276"/>
    </location>
</feature>
<comment type="function">
    <text evidence="1">Involved in DNA repair and RecF pathway recombination.</text>
</comment>
<comment type="similarity">
    <text evidence="1">Belongs to the RecO family.</text>
</comment>
<evidence type="ECO:0000255" key="1">
    <source>
        <dbReference type="HAMAP-Rule" id="MF_00201"/>
    </source>
</evidence>
<name>RECO_MYCSJ</name>
<accession>A3Q262</accession>
<organism>
    <name type="scientific">Mycobacterium sp. (strain JLS)</name>
    <dbReference type="NCBI Taxonomy" id="164757"/>
    <lineage>
        <taxon>Bacteria</taxon>
        <taxon>Bacillati</taxon>
        <taxon>Actinomycetota</taxon>
        <taxon>Actinomycetes</taxon>
        <taxon>Mycobacteriales</taxon>
        <taxon>Mycobacteriaceae</taxon>
        <taxon>Mycobacterium</taxon>
    </lineage>
</organism>
<sequence length="276" mass="30060">MRLYRDRAVVLRQHKLGEADRIVTLLTRDHGLVRAVAKGVRRTRSKFGARLEPFAHIDVQLHPGRNLDIVTQVQAIDAFASDIVSDYGRYTSACAVLETAERLAGEERAPMPALHRLTVGALRAVADGSRPRELVLDAYLLRAMGIAGWAPALTECARCATPGPHRAFHVAAGGSVCVHCRPSGSVTPPQAVLDLMSALHDGDWPAAEASTPSHRSQASGLVAAHLQWHLERQLRTLPLVERVYRVDHAVADHRISLLRQDVHRGDEPGDQLAAGS</sequence>
<keyword id="KW-0227">DNA damage</keyword>
<keyword id="KW-0233">DNA recombination</keyword>
<keyword id="KW-0234">DNA repair</keyword>
<proteinExistence type="inferred from homology"/>